<protein>
    <recommendedName>
        <fullName evidence="1">Protease HtpX</fullName>
        <ecNumber evidence="1">3.4.24.-</ecNumber>
    </recommendedName>
    <alternativeName>
        <fullName evidence="1">Heat shock protein HtpX</fullName>
    </alternativeName>
</protein>
<keyword id="KW-0997">Cell inner membrane</keyword>
<keyword id="KW-1003">Cell membrane</keyword>
<keyword id="KW-0378">Hydrolase</keyword>
<keyword id="KW-0472">Membrane</keyword>
<keyword id="KW-0479">Metal-binding</keyword>
<keyword id="KW-0482">Metalloprotease</keyword>
<keyword id="KW-0645">Protease</keyword>
<keyword id="KW-0812">Transmembrane</keyword>
<keyword id="KW-1133">Transmembrane helix</keyword>
<keyword id="KW-0862">Zinc</keyword>
<proteinExistence type="inferred from homology"/>
<dbReference type="EC" id="3.4.24.-" evidence="1"/>
<dbReference type="EMBL" id="CR628337">
    <property type="protein sequence ID" value="CAH14473.1"/>
    <property type="molecule type" value="Genomic_DNA"/>
</dbReference>
<dbReference type="RefSeq" id="WP_011214509.1">
    <property type="nucleotide sequence ID" value="NC_006369.1"/>
</dbReference>
<dbReference type="SMR" id="Q5WZY7"/>
<dbReference type="KEGG" id="lpf:lpl0243"/>
<dbReference type="LegioList" id="lpl0243"/>
<dbReference type="HOGENOM" id="CLU_042266_3_0_6"/>
<dbReference type="Proteomes" id="UP000002517">
    <property type="component" value="Chromosome"/>
</dbReference>
<dbReference type="GO" id="GO:0005886">
    <property type="term" value="C:plasma membrane"/>
    <property type="evidence" value="ECO:0007669"/>
    <property type="project" value="UniProtKB-SubCell"/>
</dbReference>
<dbReference type="GO" id="GO:0004222">
    <property type="term" value="F:metalloendopeptidase activity"/>
    <property type="evidence" value="ECO:0007669"/>
    <property type="project" value="UniProtKB-UniRule"/>
</dbReference>
<dbReference type="GO" id="GO:0008270">
    <property type="term" value="F:zinc ion binding"/>
    <property type="evidence" value="ECO:0007669"/>
    <property type="project" value="UniProtKB-UniRule"/>
</dbReference>
<dbReference type="GO" id="GO:0006508">
    <property type="term" value="P:proteolysis"/>
    <property type="evidence" value="ECO:0007669"/>
    <property type="project" value="UniProtKB-KW"/>
</dbReference>
<dbReference type="CDD" id="cd07336">
    <property type="entry name" value="M48B_HtpX_like"/>
    <property type="match status" value="1"/>
</dbReference>
<dbReference type="Gene3D" id="3.30.2010.10">
    <property type="entry name" value="Metalloproteases ('zincins'), catalytic domain"/>
    <property type="match status" value="1"/>
</dbReference>
<dbReference type="HAMAP" id="MF_00188">
    <property type="entry name" value="Pept_M48_protease_HtpX"/>
    <property type="match status" value="1"/>
</dbReference>
<dbReference type="InterPro" id="IPR050083">
    <property type="entry name" value="HtpX_protease"/>
</dbReference>
<dbReference type="InterPro" id="IPR022919">
    <property type="entry name" value="Pept_M48_protease_HtpX"/>
</dbReference>
<dbReference type="InterPro" id="IPR001915">
    <property type="entry name" value="Peptidase_M48"/>
</dbReference>
<dbReference type="NCBIfam" id="NF002826">
    <property type="entry name" value="PRK03001.1"/>
    <property type="match status" value="1"/>
</dbReference>
<dbReference type="PANTHER" id="PTHR43221">
    <property type="entry name" value="PROTEASE HTPX"/>
    <property type="match status" value="1"/>
</dbReference>
<dbReference type="PANTHER" id="PTHR43221:SF1">
    <property type="entry name" value="PROTEASE HTPX"/>
    <property type="match status" value="1"/>
</dbReference>
<dbReference type="Pfam" id="PF01435">
    <property type="entry name" value="Peptidase_M48"/>
    <property type="match status" value="1"/>
</dbReference>
<dbReference type="PROSITE" id="PS00142">
    <property type="entry name" value="ZINC_PROTEASE"/>
    <property type="match status" value="1"/>
</dbReference>
<evidence type="ECO:0000255" key="1">
    <source>
        <dbReference type="HAMAP-Rule" id="MF_00188"/>
    </source>
</evidence>
<gene>
    <name evidence="1" type="primary">htpX</name>
    <name type="ordered locus">lpl0243</name>
</gene>
<name>HTPX_LEGPL</name>
<accession>Q5WZY7</accession>
<organism>
    <name type="scientific">Legionella pneumophila (strain Lens)</name>
    <dbReference type="NCBI Taxonomy" id="297245"/>
    <lineage>
        <taxon>Bacteria</taxon>
        <taxon>Pseudomonadati</taxon>
        <taxon>Pseudomonadota</taxon>
        <taxon>Gammaproteobacteria</taxon>
        <taxon>Legionellales</taxon>
        <taxon>Legionellaceae</taxon>
        <taxon>Legionella</taxon>
    </lineage>
</organism>
<comment type="cofactor">
    <cofactor evidence="1">
        <name>Zn(2+)</name>
        <dbReference type="ChEBI" id="CHEBI:29105"/>
    </cofactor>
    <text evidence="1">Binds 1 zinc ion per subunit.</text>
</comment>
<comment type="subcellular location">
    <subcellularLocation>
        <location evidence="1">Cell inner membrane</location>
        <topology evidence="1">Multi-pass membrane protein</topology>
    </subcellularLocation>
</comment>
<comment type="similarity">
    <text evidence="1">Belongs to the peptidase M48B family.</text>
</comment>
<feature type="chain" id="PRO_1000077469" description="Protease HtpX">
    <location>
        <begin position="1"/>
        <end position="280"/>
    </location>
</feature>
<feature type="transmembrane region" description="Helical" evidence="1">
    <location>
        <begin position="7"/>
        <end position="26"/>
    </location>
</feature>
<feature type="transmembrane region" description="Helical" evidence="1">
    <location>
        <begin position="30"/>
        <end position="49"/>
    </location>
</feature>
<feature type="transmembrane region" description="Helical" evidence="1">
    <location>
        <begin position="146"/>
        <end position="166"/>
    </location>
</feature>
<feature type="transmembrane region" description="Helical" evidence="1">
    <location>
        <begin position="178"/>
        <end position="198"/>
    </location>
</feature>
<feature type="active site" evidence="1">
    <location>
        <position position="130"/>
    </location>
</feature>
<feature type="binding site" evidence="1">
    <location>
        <position position="129"/>
    </location>
    <ligand>
        <name>Zn(2+)</name>
        <dbReference type="ChEBI" id="CHEBI:29105"/>
        <note>catalytic</note>
    </ligand>
</feature>
<feature type="binding site" evidence="1">
    <location>
        <position position="133"/>
    </location>
    <ligand>
        <name>Zn(2+)</name>
        <dbReference type="ChEBI" id="CHEBI:29105"/>
        <note>catalytic</note>
    </ligand>
</feature>
<feature type="binding site" evidence="1">
    <location>
        <position position="203"/>
    </location>
    <ligand>
        <name>Zn(2+)</name>
        <dbReference type="ChEBI" id="CHEBI:29105"/>
        <note>catalytic</note>
    </ligand>
</feature>
<reference key="1">
    <citation type="journal article" date="2004" name="Nat. Genet.">
        <title>Evidence in the Legionella pneumophila genome for exploitation of host cell functions and high genome plasticity.</title>
        <authorList>
            <person name="Cazalet C."/>
            <person name="Rusniok C."/>
            <person name="Brueggemann H."/>
            <person name="Zidane N."/>
            <person name="Magnier A."/>
            <person name="Ma L."/>
            <person name="Tichit M."/>
            <person name="Jarraud S."/>
            <person name="Bouchier C."/>
            <person name="Vandenesch F."/>
            <person name="Kunst F."/>
            <person name="Etienne J."/>
            <person name="Glaser P."/>
            <person name="Buchrieser C."/>
        </authorList>
    </citation>
    <scope>NUCLEOTIDE SEQUENCE [LARGE SCALE GENOMIC DNA]</scope>
    <source>
        <strain>Lens</strain>
    </source>
</reference>
<sequence length="280" mass="30264">MINNLKTFILLASLTALLVVIGGLLGGSTGMLVALLFAGIMNFSAYWYSDTLVLKMYNAEPLSNNHFVYHIVSELAHRAGTSVPKVYLINNSTPNAFATGRNPENASIAVTTGLLDRLTQEEITGVLAHELAHVIHRDTLINVVSATIAGAISGIANMFMWLSMFGHNSNNQEGVHPVVGMIMMIVAPLAAGLIQMAISRSREFEADAGGAQISGNPQWLASALLKLDQANHEQYFDEAETHPATAHLFIINPLNGEKLANLFSTHPSTAERVARLRAMY</sequence>